<protein>
    <recommendedName>
        <fullName evidence="1">Ribonuclease 3</fullName>
        <ecNumber evidence="1">3.1.26.3</ecNumber>
    </recommendedName>
    <alternativeName>
        <fullName evidence="1">Ribonuclease III</fullName>
        <shortName evidence="1">RNase III</shortName>
    </alternativeName>
</protein>
<organism>
    <name type="scientific">Bacillus velezensis (strain DSM 23117 / BGSC 10A6 / LMG 26770 / FZB42)</name>
    <name type="common">Bacillus amyloliquefaciens subsp. plantarum</name>
    <dbReference type="NCBI Taxonomy" id="326423"/>
    <lineage>
        <taxon>Bacteria</taxon>
        <taxon>Bacillati</taxon>
        <taxon>Bacillota</taxon>
        <taxon>Bacilli</taxon>
        <taxon>Bacillales</taxon>
        <taxon>Bacillaceae</taxon>
        <taxon>Bacillus</taxon>
        <taxon>Bacillus amyloliquefaciens group</taxon>
    </lineage>
</organism>
<name>RNC_BACVZ</name>
<proteinExistence type="inferred from homology"/>
<keyword id="KW-0963">Cytoplasm</keyword>
<keyword id="KW-0255">Endonuclease</keyword>
<keyword id="KW-0378">Hydrolase</keyword>
<keyword id="KW-0460">Magnesium</keyword>
<keyword id="KW-0479">Metal-binding</keyword>
<keyword id="KW-0507">mRNA processing</keyword>
<keyword id="KW-0540">Nuclease</keyword>
<keyword id="KW-0694">RNA-binding</keyword>
<keyword id="KW-0698">rRNA processing</keyword>
<keyword id="KW-0699">rRNA-binding</keyword>
<keyword id="KW-0819">tRNA processing</keyword>
<feature type="chain" id="PRO_1000075722" description="Ribonuclease 3">
    <location>
        <begin position="1"/>
        <end position="249"/>
    </location>
</feature>
<feature type="domain" description="RNase III" evidence="1">
    <location>
        <begin position="20"/>
        <end position="149"/>
    </location>
</feature>
<feature type="domain" description="DRBM" evidence="1">
    <location>
        <begin position="175"/>
        <end position="244"/>
    </location>
</feature>
<feature type="region of interest" description="Disordered" evidence="2">
    <location>
        <begin position="223"/>
        <end position="249"/>
    </location>
</feature>
<feature type="active site" evidence="1">
    <location>
        <position position="66"/>
    </location>
</feature>
<feature type="active site" evidence="1">
    <location>
        <position position="138"/>
    </location>
</feature>
<feature type="binding site" evidence="1">
    <location>
        <position position="62"/>
    </location>
    <ligand>
        <name>Mg(2+)</name>
        <dbReference type="ChEBI" id="CHEBI:18420"/>
    </ligand>
</feature>
<feature type="binding site" evidence="1">
    <location>
        <position position="135"/>
    </location>
    <ligand>
        <name>Mg(2+)</name>
        <dbReference type="ChEBI" id="CHEBI:18420"/>
    </ligand>
</feature>
<feature type="binding site" evidence="1">
    <location>
        <position position="138"/>
    </location>
    <ligand>
        <name>Mg(2+)</name>
        <dbReference type="ChEBI" id="CHEBI:18420"/>
    </ligand>
</feature>
<comment type="function">
    <text evidence="1">Digests double-stranded RNA. Involved in the processing of primary rRNA transcript to yield the immediate precursors to the large and small rRNAs (23S and 16S). Processes some mRNAs, and tRNAs when they are encoded in the rRNA operon. Processes pre-crRNA and tracrRNA of type II CRISPR loci if present in the organism.</text>
</comment>
<comment type="catalytic activity">
    <reaction evidence="1">
        <text>Endonucleolytic cleavage to 5'-phosphomonoester.</text>
        <dbReference type="EC" id="3.1.26.3"/>
    </reaction>
</comment>
<comment type="cofactor">
    <cofactor evidence="1">
        <name>Mg(2+)</name>
        <dbReference type="ChEBI" id="CHEBI:18420"/>
    </cofactor>
</comment>
<comment type="subunit">
    <text evidence="1">Homodimer.</text>
</comment>
<comment type="subcellular location">
    <subcellularLocation>
        <location evidence="1">Cytoplasm</location>
    </subcellularLocation>
</comment>
<comment type="similarity">
    <text evidence="1">Belongs to the ribonuclease III family.</text>
</comment>
<accession>A7Z4L3</accession>
<sequence>MSKHSHFKDKKKFYKKIEQFKEFQERISVHFQNEKLLYQAFTHSSYVNEHRKKPYEDNERLEFLGDAVLELTISQFLFAKYPAMSEGDLTKLRAAIVCEPSLVSLAHELSFGDLVLLGKGEEMTGGRKRPALLADVFEAFIGALYLDQGLDPVQQFLKVYVFPKINDGAFSHVMDFKSQLQEFVQRDGKGSLEYKILNEKGPAHNREFEALVSLKGEALGIGNGRSKKEAEQHAAQEALAKMQKHHTKQ</sequence>
<gene>
    <name evidence="1" type="primary">rnc</name>
    <name type="ordered locus">RBAM_015760</name>
</gene>
<evidence type="ECO:0000255" key="1">
    <source>
        <dbReference type="HAMAP-Rule" id="MF_00104"/>
    </source>
</evidence>
<evidence type="ECO:0000256" key="2">
    <source>
        <dbReference type="SAM" id="MobiDB-lite"/>
    </source>
</evidence>
<reference key="1">
    <citation type="journal article" date="2007" name="Nat. Biotechnol.">
        <title>Comparative analysis of the complete genome sequence of the plant growth-promoting bacterium Bacillus amyloliquefaciens FZB42.</title>
        <authorList>
            <person name="Chen X.H."/>
            <person name="Koumoutsi A."/>
            <person name="Scholz R."/>
            <person name="Eisenreich A."/>
            <person name="Schneider K."/>
            <person name="Heinemeyer I."/>
            <person name="Morgenstern B."/>
            <person name="Voss B."/>
            <person name="Hess W.R."/>
            <person name="Reva O."/>
            <person name="Junge H."/>
            <person name="Voigt B."/>
            <person name="Jungblut P.R."/>
            <person name="Vater J."/>
            <person name="Suessmuth R."/>
            <person name="Liesegang H."/>
            <person name="Strittmatter A."/>
            <person name="Gottschalk G."/>
            <person name="Borriss R."/>
        </authorList>
    </citation>
    <scope>NUCLEOTIDE SEQUENCE [LARGE SCALE GENOMIC DNA]</scope>
    <source>
        <strain>DSM 23117 / BGSC 10A6 / LMG 26770 / FZB42</strain>
    </source>
</reference>
<dbReference type="EC" id="3.1.26.3" evidence="1"/>
<dbReference type="EMBL" id="CP000560">
    <property type="protein sequence ID" value="ABS73939.1"/>
    <property type="molecule type" value="Genomic_DNA"/>
</dbReference>
<dbReference type="SMR" id="A7Z4L3"/>
<dbReference type="GeneID" id="93080709"/>
<dbReference type="KEGG" id="bay:RBAM_015760"/>
<dbReference type="HOGENOM" id="CLU_000907_1_3_9"/>
<dbReference type="Proteomes" id="UP000001120">
    <property type="component" value="Chromosome"/>
</dbReference>
<dbReference type="GO" id="GO:0005737">
    <property type="term" value="C:cytoplasm"/>
    <property type="evidence" value="ECO:0007669"/>
    <property type="project" value="UniProtKB-SubCell"/>
</dbReference>
<dbReference type="GO" id="GO:0003725">
    <property type="term" value="F:double-stranded RNA binding"/>
    <property type="evidence" value="ECO:0007669"/>
    <property type="project" value="TreeGrafter"/>
</dbReference>
<dbReference type="GO" id="GO:0046872">
    <property type="term" value="F:metal ion binding"/>
    <property type="evidence" value="ECO:0007669"/>
    <property type="project" value="UniProtKB-KW"/>
</dbReference>
<dbReference type="GO" id="GO:0004525">
    <property type="term" value="F:ribonuclease III activity"/>
    <property type="evidence" value="ECO:0007669"/>
    <property type="project" value="UniProtKB-UniRule"/>
</dbReference>
<dbReference type="GO" id="GO:0019843">
    <property type="term" value="F:rRNA binding"/>
    <property type="evidence" value="ECO:0007669"/>
    <property type="project" value="UniProtKB-KW"/>
</dbReference>
<dbReference type="GO" id="GO:0006397">
    <property type="term" value="P:mRNA processing"/>
    <property type="evidence" value="ECO:0007669"/>
    <property type="project" value="UniProtKB-UniRule"/>
</dbReference>
<dbReference type="GO" id="GO:0010468">
    <property type="term" value="P:regulation of gene expression"/>
    <property type="evidence" value="ECO:0007669"/>
    <property type="project" value="TreeGrafter"/>
</dbReference>
<dbReference type="GO" id="GO:0006364">
    <property type="term" value="P:rRNA processing"/>
    <property type="evidence" value="ECO:0007669"/>
    <property type="project" value="UniProtKB-UniRule"/>
</dbReference>
<dbReference type="GO" id="GO:0008033">
    <property type="term" value="P:tRNA processing"/>
    <property type="evidence" value="ECO:0007669"/>
    <property type="project" value="UniProtKB-KW"/>
</dbReference>
<dbReference type="CDD" id="cd10845">
    <property type="entry name" value="DSRM_RNAse_III_family"/>
    <property type="match status" value="1"/>
</dbReference>
<dbReference type="CDD" id="cd00593">
    <property type="entry name" value="RIBOc"/>
    <property type="match status" value="1"/>
</dbReference>
<dbReference type="FunFam" id="1.10.1520.10:FF:000001">
    <property type="entry name" value="Ribonuclease 3"/>
    <property type="match status" value="1"/>
</dbReference>
<dbReference type="FunFam" id="3.30.160.20:FF:000003">
    <property type="entry name" value="Ribonuclease 3"/>
    <property type="match status" value="1"/>
</dbReference>
<dbReference type="Gene3D" id="3.30.160.20">
    <property type="match status" value="1"/>
</dbReference>
<dbReference type="Gene3D" id="1.10.1520.10">
    <property type="entry name" value="Ribonuclease III domain"/>
    <property type="match status" value="1"/>
</dbReference>
<dbReference type="HAMAP" id="MF_00104">
    <property type="entry name" value="RNase_III"/>
    <property type="match status" value="1"/>
</dbReference>
<dbReference type="InterPro" id="IPR014720">
    <property type="entry name" value="dsRBD_dom"/>
</dbReference>
<dbReference type="InterPro" id="IPR011907">
    <property type="entry name" value="RNase_III"/>
</dbReference>
<dbReference type="InterPro" id="IPR000999">
    <property type="entry name" value="RNase_III_dom"/>
</dbReference>
<dbReference type="InterPro" id="IPR036389">
    <property type="entry name" value="RNase_III_sf"/>
</dbReference>
<dbReference type="NCBIfam" id="TIGR02191">
    <property type="entry name" value="RNaseIII"/>
    <property type="match status" value="1"/>
</dbReference>
<dbReference type="PANTHER" id="PTHR11207:SF0">
    <property type="entry name" value="RIBONUCLEASE 3"/>
    <property type="match status" value="1"/>
</dbReference>
<dbReference type="PANTHER" id="PTHR11207">
    <property type="entry name" value="RIBONUCLEASE III"/>
    <property type="match status" value="1"/>
</dbReference>
<dbReference type="Pfam" id="PF00035">
    <property type="entry name" value="dsrm"/>
    <property type="match status" value="1"/>
</dbReference>
<dbReference type="Pfam" id="PF14622">
    <property type="entry name" value="Ribonucleas_3_3"/>
    <property type="match status" value="1"/>
</dbReference>
<dbReference type="SMART" id="SM00358">
    <property type="entry name" value="DSRM"/>
    <property type="match status" value="1"/>
</dbReference>
<dbReference type="SMART" id="SM00535">
    <property type="entry name" value="RIBOc"/>
    <property type="match status" value="1"/>
</dbReference>
<dbReference type="SUPFAM" id="SSF54768">
    <property type="entry name" value="dsRNA-binding domain-like"/>
    <property type="match status" value="1"/>
</dbReference>
<dbReference type="SUPFAM" id="SSF69065">
    <property type="entry name" value="RNase III domain-like"/>
    <property type="match status" value="1"/>
</dbReference>
<dbReference type="PROSITE" id="PS50137">
    <property type="entry name" value="DS_RBD"/>
    <property type="match status" value="1"/>
</dbReference>
<dbReference type="PROSITE" id="PS00517">
    <property type="entry name" value="RNASE_3_1"/>
    <property type="match status" value="1"/>
</dbReference>
<dbReference type="PROSITE" id="PS50142">
    <property type="entry name" value="RNASE_3_2"/>
    <property type="match status" value="1"/>
</dbReference>